<keyword id="KW-1185">Reference proteome</keyword>
<keyword id="KW-0677">Repeat</keyword>
<keyword id="KW-0853">WD repeat</keyword>
<name>CIAO1_CULQU</name>
<comment type="function">
    <text evidence="1">Essential component of the cytosolic iron-sulfur (Fe/S) protein assembly machinery. Required for the maturation of extramitochondrial Fe/S proteins.</text>
</comment>
<comment type="similarity">
    <text evidence="1">Belongs to the WD repeat CIA1 family.</text>
</comment>
<evidence type="ECO:0000255" key="1">
    <source>
        <dbReference type="HAMAP-Rule" id="MF_03037"/>
    </source>
</evidence>
<sequence>MGKLTLLQCLSGHRGRVWGAGWHPRDPVLATCGEDKTIRIWADDGTGRWVPKTVLSDGHTRTIRDVAWSPCGRFLASASFDATVAIWDRRSGEFECNATLEGHENEVKSVSWSKSGALLATCSRDKSVWIWEVAQEDEYECAAVLNTHSQDVKKVEWHPNEDVLASASYDNTIQLYREDLADSDWSSFDTLASHDSTVWSIAFDASGSRLASCSDDQTVRIWQEYKPGNEFGVACPDGKTPVWKCVCTLSGFHSRAVYDISWCKKTGLIATACGDDMVRIFREVAGSPANEPTFEMVASKHAHSQDANTVEWSPTVAGLLVTTSDDGDVKLWKFEDDE</sequence>
<protein>
    <recommendedName>
        <fullName evidence="1">Probable cytosolic iron-sulfur protein assembly protein Ciao1</fullName>
    </recommendedName>
</protein>
<reference key="1">
    <citation type="submission" date="2007-03" db="EMBL/GenBank/DDBJ databases">
        <title>Annotation of Culex pipiens quinquefasciatus.</title>
        <authorList>
            <consortium name="The Broad Institute Genome Sequencing Platform"/>
            <person name="Atkinson P.W."/>
            <person name="Hemingway J."/>
            <person name="Christensen B.M."/>
            <person name="Higgs S."/>
            <person name="Kodira C.D."/>
            <person name="Hannick L.I."/>
            <person name="Megy K."/>
            <person name="O'Leary S.B."/>
            <person name="Pearson M."/>
            <person name="Haas B.J."/>
            <person name="Mauceli E."/>
            <person name="Wortman J.R."/>
            <person name="Lee N.H."/>
            <person name="Guigo R."/>
            <person name="Stanke M."/>
            <person name="Alvarado L."/>
            <person name="Amedeo P."/>
            <person name="Antoine C.H."/>
            <person name="Arensburger P."/>
            <person name="Bidwell S.L."/>
            <person name="Crawford M."/>
            <person name="Camaro F."/>
            <person name="Devon K."/>
            <person name="Engels R."/>
            <person name="Hammond M."/>
            <person name="Howarth C."/>
            <person name="Koehrsen M."/>
            <person name="Lawson D."/>
            <person name="Montgomery P."/>
            <person name="Nene V."/>
            <person name="Nusbaum C."/>
            <person name="Puiu D."/>
            <person name="Romero-Severson J."/>
            <person name="Severson D.W."/>
            <person name="Shumway M."/>
            <person name="Sisk P."/>
            <person name="Stolte C."/>
            <person name="Zeng Q."/>
            <person name="Eisenstadt E."/>
            <person name="Fraser-Liggett C.M."/>
            <person name="Strausberg R."/>
            <person name="Galagan J."/>
            <person name="Birren B."/>
            <person name="Collins F.H."/>
        </authorList>
    </citation>
    <scope>NUCLEOTIDE SEQUENCE [LARGE SCALE GENOMIC DNA]</scope>
    <source>
        <strain>JHB</strain>
    </source>
</reference>
<accession>B0XAF3</accession>
<feature type="chain" id="PRO_0000382482" description="Probable cytosolic iron-sulfur protein assembly protein Ciao1">
    <location>
        <begin position="1"/>
        <end position="338"/>
    </location>
</feature>
<feature type="repeat" description="WD 1">
    <location>
        <begin position="12"/>
        <end position="51"/>
    </location>
</feature>
<feature type="repeat" description="WD 2">
    <location>
        <begin position="58"/>
        <end position="97"/>
    </location>
</feature>
<feature type="repeat" description="WD 3">
    <location>
        <begin position="102"/>
        <end position="141"/>
    </location>
</feature>
<feature type="repeat" description="WD 4">
    <location>
        <begin position="147"/>
        <end position="186"/>
    </location>
</feature>
<feature type="repeat" description="WD 5">
    <location>
        <begin position="193"/>
        <end position="232"/>
    </location>
</feature>
<feature type="repeat" description="WD 6">
    <location>
        <begin position="234"/>
        <end position="252"/>
    </location>
</feature>
<feature type="repeat" description="WD 7">
    <location>
        <begin position="253"/>
        <end position="291"/>
    </location>
</feature>
<feature type="repeat" description="WD 8">
    <location>
        <begin position="302"/>
        <end position="338"/>
    </location>
</feature>
<gene>
    <name evidence="1" type="primary">Ciao1</name>
    <name type="ORF">CPIJ016096</name>
</gene>
<organism>
    <name type="scientific">Culex quinquefasciatus</name>
    <name type="common">Southern house mosquito</name>
    <name type="synonym">Culex pungens</name>
    <dbReference type="NCBI Taxonomy" id="7176"/>
    <lineage>
        <taxon>Eukaryota</taxon>
        <taxon>Metazoa</taxon>
        <taxon>Ecdysozoa</taxon>
        <taxon>Arthropoda</taxon>
        <taxon>Hexapoda</taxon>
        <taxon>Insecta</taxon>
        <taxon>Pterygota</taxon>
        <taxon>Neoptera</taxon>
        <taxon>Endopterygota</taxon>
        <taxon>Diptera</taxon>
        <taxon>Nematocera</taxon>
        <taxon>Culicoidea</taxon>
        <taxon>Culicidae</taxon>
        <taxon>Culicinae</taxon>
        <taxon>Culicini</taxon>
        <taxon>Culex</taxon>
        <taxon>Culex</taxon>
    </lineage>
</organism>
<proteinExistence type="inferred from homology"/>
<dbReference type="EMBL" id="DS232580">
    <property type="protein sequence ID" value="EDS43650.1"/>
    <property type="molecule type" value="Genomic_DNA"/>
</dbReference>
<dbReference type="SMR" id="B0XAF3"/>
<dbReference type="FunCoup" id="B0XAF3">
    <property type="interactions" value="680"/>
</dbReference>
<dbReference type="STRING" id="7176.B0XAF3"/>
<dbReference type="EnsemblMetazoa" id="CPIJ016096-RA">
    <property type="protein sequence ID" value="CPIJ016096-PA"/>
    <property type="gene ID" value="CPIJ016096"/>
</dbReference>
<dbReference type="EnsemblMetazoa" id="CQUJHB011270.R17412">
    <property type="protein sequence ID" value="CQUJHB011270.P17412"/>
    <property type="gene ID" value="CQUJHB011270"/>
</dbReference>
<dbReference type="EnsemblMetazoa" id="XM_001866590.2">
    <property type="protein sequence ID" value="XP_001866625.1"/>
    <property type="gene ID" value="LOC6049938"/>
</dbReference>
<dbReference type="GeneID" id="6049938"/>
<dbReference type="KEGG" id="cqu:CpipJ_CPIJ016096"/>
<dbReference type="CTD" id="9391"/>
<dbReference type="VEuPathDB" id="VectorBase:CPIJ016096"/>
<dbReference type="VEuPathDB" id="VectorBase:CQUJHB011270"/>
<dbReference type="eggNOG" id="KOG0645">
    <property type="taxonomic scope" value="Eukaryota"/>
</dbReference>
<dbReference type="HOGENOM" id="CLU_000288_57_8_1"/>
<dbReference type="InParanoid" id="B0XAF3"/>
<dbReference type="OMA" id="IREIRWS"/>
<dbReference type="OrthoDB" id="284782at2759"/>
<dbReference type="PhylomeDB" id="B0XAF3"/>
<dbReference type="Proteomes" id="UP000002320">
    <property type="component" value="Unassembled WGS sequence"/>
</dbReference>
<dbReference type="GO" id="GO:0097361">
    <property type="term" value="C:cytosolic [4Fe-4S] assembly targeting complex"/>
    <property type="evidence" value="ECO:0007669"/>
    <property type="project" value="InterPro"/>
</dbReference>
<dbReference type="GO" id="GO:0016226">
    <property type="term" value="P:iron-sulfur cluster assembly"/>
    <property type="evidence" value="ECO:0007669"/>
    <property type="project" value="UniProtKB-UniRule"/>
</dbReference>
<dbReference type="GO" id="GO:0051604">
    <property type="term" value="P:protein maturation"/>
    <property type="evidence" value="ECO:0000250"/>
    <property type="project" value="UniProtKB"/>
</dbReference>
<dbReference type="CDD" id="cd00200">
    <property type="entry name" value="WD40"/>
    <property type="match status" value="1"/>
</dbReference>
<dbReference type="FunFam" id="2.130.10.10:FF:000136">
    <property type="entry name" value="Probable cytosolic iron-sulfur protein assembly protein CIAO1"/>
    <property type="match status" value="1"/>
</dbReference>
<dbReference type="Gene3D" id="2.130.10.10">
    <property type="entry name" value="YVTN repeat-like/Quinoprotein amine dehydrogenase"/>
    <property type="match status" value="1"/>
</dbReference>
<dbReference type="HAMAP" id="MF_03037">
    <property type="entry name" value="ciao1"/>
    <property type="match status" value="1"/>
</dbReference>
<dbReference type="InterPro" id="IPR028608">
    <property type="entry name" value="CIAO1/Cia1"/>
</dbReference>
<dbReference type="InterPro" id="IPR020472">
    <property type="entry name" value="G-protein_beta_WD-40_rep"/>
</dbReference>
<dbReference type="InterPro" id="IPR015943">
    <property type="entry name" value="WD40/YVTN_repeat-like_dom_sf"/>
</dbReference>
<dbReference type="InterPro" id="IPR019775">
    <property type="entry name" value="WD40_repeat_CS"/>
</dbReference>
<dbReference type="InterPro" id="IPR036322">
    <property type="entry name" value="WD40_repeat_dom_sf"/>
</dbReference>
<dbReference type="InterPro" id="IPR001680">
    <property type="entry name" value="WD40_rpt"/>
</dbReference>
<dbReference type="PANTHER" id="PTHR19920:SF0">
    <property type="entry name" value="CYTOSOLIC IRON-SULFUR PROTEIN ASSEMBLY PROTEIN CIAO1-RELATED"/>
    <property type="match status" value="1"/>
</dbReference>
<dbReference type="PANTHER" id="PTHR19920">
    <property type="entry name" value="WD40 PROTEIN CIAO1"/>
    <property type="match status" value="1"/>
</dbReference>
<dbReference type="Pfam" id="PF00400">
    <property type="entry name" value="WD40"/>
    <property type="match status" value="7"/>
</dbReference>
<dbReference type="PRINTS" id="PR00320">
    <property type="entry name" value="GPROTEINBRPT"/>
</dbReference>
<dbReference type="SMART" id="SM00320">
    <property type="entry name" value="WD40"/>
    <property type="match status" value="7"/>
</dbReference>
<dbReference type="SUPFAM" id="SSF50978">
    <property type="entry name" value="WD40 repeat-like"/>
    <property type="match status" value="1"/>
</dbReference>
<dbReference type="PROSITE" id="PS00678">
    <property type="entry name" value="WD_REPEATS_1"/>
    <property type="match status" value="1"/>
</dbReference>
<dbReference type="PROSITE" id="PS50082">
    <property type="entry name" value="WD_REPEATS_2"/>
    <property type="match status" value="6"/>
</dbReference>
<dbReference type="PROSITE" id="PS50294">
    <property type="entry name" value="WD_REPEATS_REGION"/>
    <property type="match status" value="1"/>
</dbReference>